<feature type="chain" id="PRO_1000060066" description="Probable protein kinase UbiB">
    <location>
        <begin position="1"/>
        <end position="546"/>
    </location>
</feature>
<feature type="transmembrane region" description="Helical" evidence="1">
    <location>
        <begin position="501"/>
        <end position="521"/>
    </location>
</feature>
<feature type="transmembrane region" description="Helical" evidence="1">
    <location>
        <begin position="522"/>
        <end position="542"/>
    </location>
</feature>
<feature type="domain" description="Protein kinase" evidence="1">
    <location>
        <begin position="124"/>
        <end position="502"/>
    </location>
</feature>
<feature type="active site" description="Proton acceptor" evidence="1">
    <location>
        <position position="288"/>
    </location>
</feature>
<feature type="binding site" evidence="1">
    <location>
        <begin position="130"/>
        <end position="138"/>
    </location>
    <ligand>
        <name>ATP</name>
        <dbReference type="ChEBI" id="CHEBI:30616"/>
    </ligand>
</feature>
<feature type="binding site" evidence="1">
    <location>
        <position position="153"/>
    </location>
    <ligand>
        <name>ATP</name>
        <dbReference type="ChEBI" id="CHEBI:30616"/>
    </ligand>
</feature>
<protein>
    <recommendedName>
        <fullName evidence="1">Probable protein kinase UbiB</fullName>
        <ecNumber evidence="1">2.7.-.-</ecNumber>
    </recommendedName>
    <alternativeName>
        <fullName evidence="1">Ubiquinone biosynthesis protein UbiB</fullName>
    </alternativeName>
</protein>
<gene>
    <name evidence="1" type="primary">ubiB</name>
    <name type="ordered locus">Ent638_3958</name>
</gene>
<name>UBIB_ENT38</name>
<keyword id="KW-0067">ATP-binding</keyword>
<keyword id="KW-0997">Cell inner membrane</keyword>
<keyword id="KW-1003">Cell membrane</keyword>
<keyword id="KW-0418">Kinase</keyword>
<keyword id="KW-0472">Membrane</keyword>
<keyword id="KW-0547">Nucleotide-binding</keyword>
<keyword id="KW-0808">Transferase</keyword>
<keyword id="KW-0812">Transmembrane</keyword>
<keyword id="KW-1133">Transmembrane helix</keyword>
<keyword id="KW-0831">Ubiquinone biosynthesis</keyword>
<reference key="1">
    <citation type="journal article" date="2010" name="PLoS Genet.">
        <title>Genome sequence of the plant growth promoting endophytic bacterium Enterobacter sp. 638.</title>
        <authorList>
            <person name="Taghavi S."/>
            <person name="van der Lelie D."/>
            <person name="Hoffman A."/>
            <person name="Zhang Y.B."/>
            <person name="Walla M.D."/>
            <person name="Vangronsveld J."/>
            <person name="Newman L."/>
            <person name="Monchy S."/>
        </authorList>
    </citation>
    <scope>NUCLEOTIDE SEQUENCE [LARGE SCALE GENOMIC DNA]</scope>
    <source>
        <strain>638</strain>
    </source>
</reference>
<organism>
    <name type="scientific">Enterobacter sp. (strain 638)</name>
    <dbReference type="NCBI Taxonomy" id="399742"/>
    <lineage>
        <taxon>Bacteria</taxon>
        <taxon>Pseudomonadati</taxon>
        <taxon>Pseudomonadota</taxon>
        <taxon>Gammaproteobacteria</taxon>
        <taxon>Enterobacterales</taxon>
        <taxon>Enterobacteriaceae</taxon>
        <taxon>Enterobacter</taxon>
    </lineage>
</organism>
<comment type="function">
    <text evidence="1">Is probably a protein kinase regulator of UbiI activity which is involved in aerobic coenzyme Q (ubiquinone) biosynthesis.</text>
</comment>
<comment type="pathway">
    <text>Cofactor biosynthesis; ubiquinone biosynthesis [regulation].</text>
</comment>
<comment type="subcellular location">
    <subcellularLocation>
        <location evidence="1">Cell inner membrane</location>
        <topology evidence="1">Multi-pass membrane protein</topology>
    </subcellularLocation>
</comment>
<comment type="similarity">
    <text evidence="1">Belongs to the ABC1 family. UbiB subfamily.</text>
</comment>
<dbReference type="EC" id="2.7.-.-" evidence="1"/>
<dbReference type="EMBL" id="CP000653">
    <property type="protein sequence ID" value="ABP62613.1"/>
    <property type="molecule type" value="Genomic_DNA"/>
</dbReference>
<dbReference type="RefSeq" id="WP_015960918.1">
    <property type="nucleotide sequence ID" value="NC_009436.1"/>
</dbReference>
<dbReference type="SMR" id="A4WFY3"/>
<dbReference type="STRING" id="399742.Ent638_3958"/>
<dbReference type="KEGG" id="ent:Ent638_3958"/>
<dbReference type="eggNOG" id="COG0661">
    <property type="taxonomic scope" value="Bacteria"/>
</dbReference>
<dbReference type="HOGENOM" id="CLU_006533_0_0_6"/>
<dbReference type="OrthoDB" id="9795390at2"/>
<dbReference type="UniPathway" id="UPA00232"/>
<dbReference type="Proteomes" id="UP000000230">
    <property type="component" value="Chromosome"/>
</dbReference>
<dbReference type="GO" id="GO:0005886">
    <property type="term" value="C:plasma membrane"/>
    <property type="evidence" value="ECO:0007669"/>
    <property type="project" value="UniProtKB-SubCell"/>
</dbReference>
<dbReference type="GO" id="GO:0005524">
    <property type="term" value="F:ATP binding"/>
    <property type="evidence" value="ECO:0007669"/>
    <property type="project" value="UniProtKB-KW"/>
</dbReference>
<dbReference type="GO" id="GO:0004672">
    <property type="term" value="F:protein kinase activity"/>
    <property type="evidence" value="ECO:0007669"/>
    <property type="project" value="UniProtKB-UniRule"/>
</dbReference>
<dbReference type="GO" id="GO:0010795">
    <property type="term" value="P:regulation of ubiquinone biosynthetic process"/>
    <property type="evidence" value="ECO:0007669"/>
    <property type="project" value="UniProtKB-UniRule"/>
</dbReference>
<dbReference type="GO" id="GO:0006744">
    <property type="term" value="P:ubiquinone biosynthetic process"/>
    <property type="evidence" value="ECO:0007669"/>
    <property type="project" value="UniProtKB-UniPathway"/>
</dbReference>
<dbReference type="CDD" id="cd13972">
    <property type="entry name" value="UbiB"/>
    <property type="match status" value="1"/>
</dbReference>
<dbReference type="HAMAP" id="MF_00414">
    <property type="entry name" value="UbiB"/>
    <property type="match status" value="1"/>
</dbReference>
<dbReference type="InterPro" id="IPR004147">
    <property type="entry name" value="ABC1_dom"/>
</dbReference>
<dbReference type="InterPro" id="IPR011009">
    <property type="entry name" value="Kinase-like_dom_sf"/>
</dbReference>
<dbReference type="InterPro" id="IPR010232">
    <property type="entry name" value="UbiB"/>
</dbReference>
<dbReference type="InterPro" id="IPR045308">
    <property type="entry name" value="UbiB_bact"/>
</dbReference>
<dbReference type="InterPro" id="IPR050154">
    <property type="entry name" value="UbiB_kinase"/>
</dbReference>
<dbReference type="NCBIfam" id="NF003404">
    <property type="entry name" value="PRK04750.1"/>
    <property type="match status" value="1"/>
</dbReference>
<dbReference type="NCBIfam" id="TIGR01982">
    <property type="entry name" value="UbiB"/>
    <property type="match status" value="1"/>
</dbReference>
<dbReference type="PANTHER" id="PTHR10566">
    <property type="entry name" value="CHAPERONE-ACTIVITY OF BC1 COMPLEX CABC1 -RELATED"/>
    <property type="match status" value="1"/>
</dbReference>
<dbReference type="PANTHER" id="PTHR10566:SF113">
    <property type="entry name" value="PROTEIN ACTIVITY OF BC1 COMPLEX KINASE 7, CHLOROPLASTIC"/>
    <property type="match status" value="1"/>
</dbReference>
<dbReference type="Pfam" id="PF03109">
    <property type="entry name" value="ABC1"/>
    <property type="match status" value="1"/>
</dbReference>
<dbReference type="SUPFAM" id="SSF56112">
    <property type="entry name" value="Protein kinase-like (PK-like)"/>
    <property type="match status" value="1"/>
</dbReference>
<proteinExistence type="inferred from homology"/>
<evidence type="ECO:0000255" key="1">
    <source>
        <dbReference type="HAMAP-Rule" id="MF_00414"/>
    </source>
</evidence>
<sequence>MTPGEIRRLYFIVRTFLSYGLDELIPKMRITLPLRIWRRMLFWMPNRHKDKLLGERLRLALQELGPVWIKFGQMLSTRRDLFPPQIADQLALLQDRVAPFDGARAKQQIEEAMGNIPVETWFDDFDIKPLASASIAQVHTARLKENGKEIVIKVIRPDILPVIRADMKLIYRLARWVPRLLPDGRRLRPMEVVREYEKTLIDELNLLRESANAIQLRRNFENSPMLYVPEVYSDYCSQNMMVMERIYGIPVSDIVALENQGTNMKLLAERGVQVFFTQVFRDSFFHADMHPGNIFVSYEHPEDPKYIGIDCGIVGSLNKEDKRYLAENFIAFFNRDYRKVAELHVDSGWVPPDTNVEEFEFAIRTVCEPIFEKPLSEISFGHVLLNLFNTARRFNMEVQPQLVLLQKTLLYVEGVGRQLYPQLDLWKTAKPFLESWIKDQVGLPALVRSFKEKAPFWIEKMPEIPELIYDSLRHSKNLQHSMDKITRELQSNRVRQGQSRYLFGIGATLLLSGTLLLINRPDWQMMPAWLMAGGLVVWLIGWRKTR</sequence>
<accession>A4WFY3</accession>